<comment type="function">
    <text evidence="1">NDH shuttles electrons from NAD(P)H:plastoquinone, via FMN and iron-sulfur (Fe-S) centers, to quinones in the photosynthetic chain and possibly in a chloroplast respiratory chain. The immediate electron acceptor for the enzyme in this species is believed to be plastoquinone. Couples the redox reaction to proton translocation, and thus conserves the redox energy in a proton gradient.</text>
</comment>
<comment type="catalytic activity">
    <reaction evidence="1">
        <text>a plastoquinone + NADH + (n+1) H(+)(in) = a plastoquinol + NAD(+) + n H(+)(out)</text>
        <dbReference type="Rhea" id="RHEA:42608"/>
        <dbReference type="Rhea" id="RHEA-COMP:9561"/>
        <dbReference type="Rhea" id="RHEA-COMP:9562"/>
        <dbReference type="ChEBI" id="CHEBI:15378"/>
        <dbReference type="ChEBI" id="CHEBI:17757"/>
        <dbReference type="ChEBI" id="CHEBI:57540"/>
        <dbReference type="ChEBI" id="CHEBI:57945"/>
        <dbReference type="ChEBI" id="CHEBI:62192"/>
    </reaction>
</comment>
<comment type="catalytic activity">
    <reaction evidence="1">
        <text>a plastoquinone + NADPH + (n+1) H(+)(in) = a plastoquinol + NADP(+) + n H(+)(out)</text>
        <dbReference type="Rhea" id="RHEA:42612"/>
        <dbReference type="Rhea" id="RHEA-COMP:9561"/>
        <dbReference type="Rhea" id="RHEA-COMP:9562"/>
        <dbReference type="ChEBI" id="CHEBI:15378"/>
        <dbReference type="ChEBI" id="CHEBI:17757"/>
        <dbReference type="ChEBI" id="CHEBI:57783"/>
        <dbReference type="ChEBI" id="CHEBI:58349"/>
        <dbReference type="ChEBI" id="CHEBI:62192"/>
    </reaction>
</comment>
<comment type="subunit">
    <text evidence="1">NDH is composed of at least 16 different subunits, 5 of which are encoded in the nucleus.</text>
</comment>
<comment type="subcellular location">
    <subcellularLocation>
        <location evidence="1">Plastid</location>
        <location evidence="1">Chloroplast thylakoid membrane</location>
        <topology evidence="1">Multi-pass membrane protein</topology>
    </subcellularLocation>
</comment>
<comment type="RNA editing">
    <location>
        <position position="17" evidence="2"/>
    </location>
    <location>
        <position position="158" evidence="2"/>
    </location>
    <location>
        <position position="188" evidence="2"/>
    </location>
    <location>
        <position position="357" evidence="2"/>
    </location>
</comment>
<comment type="similarity">
    <text evidence="1">Belongs to the complex I subunit 1 family.</text>
</comment>
<reference key="1">
    <citation type="journal article" date="2004" name="Curr. Genet.">
        <title>Structural features and transcript-editing analysis of sugarcane (Saccharum officinarum L.) chloroplast genome.</title>
        <authorList>
            <person name="Calsa T. Jr."/>
            <person name="Carraro D.M."/>
            <person name="Benatti M.R."/>
            <person name="Barbosa A.C."/>
            <person name="Kitajima J.P."/>
            <person name="Carrer H."/>
        </authorList>
    </citation>
    <scope>NUCLEOTIDE SEQUENCE [LARGE SCALE GENOMIC DNA]</scope>
    <scope>RNA EDITING</scope>
    <source>
        <strain>cv. SP-80-3280</strain>
    </source>
</reference>
<gene>
    <name evidence="1" type="primary">ndhA</name>
    <name type="ordered locus">PS047</name>
</gene>
<feature type="chain" id="PRO_0000226940" description="NAD(P)H-quinone oxidoreductase subunit 1, chloroplastic">
    <location>
        <begin position="1"/>
        <end position="362"/>
    </location>
</feature>
<feature type="transmembrane region" description="Helical" evidence="1">
    <location>
        <begin position="27"/>
        <end position="47"/>
    </location>
</feature>
<feature type="transmembrane region" description="Helical" evidence="1">
    <location>
        <begin position="103"/>
        <end position="123"/>
    </location>
</feature>
<feature type="transmembrane region" description="Helical" evidence="1">
    <location>
        <begin position="128"/>
        <end position="148"/>
    </location>
</feature>
<feature type="transmembrane region" description="Helical" evidence="1">
    <location>
        <begin position="164"/>
        <end position="184"/>
    </location>
</feature>
<feature type="transmembrane region" description="Helical" evidence="1">
    <location>
        <begin position="202"/>
        <end position="222"/>
    </location>
</feature>
<feature type="transmembrane region" description="Helical" evidence="1">
    <location>
        <begin position="247"/>
        <end position="267"/>
    </location>
</feature>
<feature type="transmembrane region" description="Helical" evidence="1">
    <location>
        <begin position="303"/>
        <end position="323"/>
    </location>
</feature>
<feature type="transmembrane region" description="Helical" evidence="1">
    <location>
        <begin position="342"/>
        <end position="362"/>
    </location>
</feature>
<geneLocation type="chloroplast"/>
<accession>Q6L3D5</accession>
<sequence>MIIDRVEVETINSFSKLELLKEIYGLIWILPILALLLGITIEVLVIVWLEREISASIQQRIGPEYAGPLGLLQAIADGTKLLLKEDILPSRGEIPLFSIGPSIAVISILLSFLVIPLGYHFVLADLSIGVFLWIAISSIAPIGLLMAGYSSNNKYSFLGGLRAAAQSISYEIPLTFCVLAISLLSNSLSTVDIVEAQSKYGFFGWNLWRQPIGFLVFLISSLAECERLPFDLPEAEEELVAGYQTEYSGIKYGLFYLVSYLNLLVSSLFVTVLYLGGWNFSIPYISFFGFFQMNKIIGILEMVIGIFITLTKAYLFLFISITIRWTLPRMRMDQLLNLGWKFLLPISLGNLLLTTSFQLVSL</sequence>
<keyword id="KW-0150">Chloroplast</keyword>
<keyword id="KW-0472">Membrane</keyword>
<keyword id="KW-0520">NAD</keyword>
<keyword id="KW-0521">NADP</keyword>
<keyword id="KW-0934">Plastid</keyword>
<keyword id="KW-0618">Plastoquinone</keyword>
<keyword id="KW-0874">Quinone</keyword>
<keyword id="KW-0691">RNA editing</keyword>
<keyword id="KW-0793">Thylakoid</keyword>
<keyword id="KW-1278">Translocase</keyword>
<keyword id="KW-0812">Transmembrane</keyword>
<keyword id="KW-1133">Transmembrane helix</keyword>
<evidence type="ECO:0000255" key="1">
    <source>
        <dbReference type="HAMAP-Rule" id="MF_01350"/>
    </source>
</evidence>
<evidence type="ECO:0000269" key="2">
    <source>
    </source>
</evidence>
<protein>
    <recommendedName>
        <fullName evidence="1">NAD(P)H-quinone oxidoreductase subunit 1, chloroplastic</fullName>
        <ecNumber evidence="1">7.1.1.-</ecNumber>
    </recommendedName>
    <alternativeName>
        <fullName evidence="1">NAD(P)H dehydrogenase subunit 1</fullName>
        <shortName evidence="1">NDH subunit 1</shortName>
    </alternativeName>
    <alternativeName>
        <fullName evidence="1">NADH-plastoquinone oxidoreductase subunit 1</fullName>
    </alternativeName>
</protein>
<proteinExistence type="evidence at transcript level"/>
<organism>
    <name type="scientific">Saccharum hybrid</name>
    <name type="common">Sugarcane</name>
    <dbReference type="NCBI Taxonomy" id="15819"/>
    <lineage>
        <taxon>Eukaryota</taxon>
        <taxon>Viridiplantae</taxon>
        <taxon>Streptophyta</taxon>
        <taxon>Embryophyta</taxon>
        <taxon>Tracheophyta</taxon>
        <taxon>Spermatophyta</taxon>
        <taxon>Magnoliopsida</taxon>
        <taxon>Liliopsida</taxon>
        <taxon>Poales</taxon>
        <taxon>Poaceae</taxon>
        <taxon>PACMAD clade</taxon>
        <taxon>Panicoideae</taxon>
        <taxon>Andropogonodae</taxon>
        <taxon>Andropogoneae</taxon>
        <taxon>Saccharinae</taxon>
        <taxon>Saccharum</taxon>
    </lineage>
</organism>
<dbReference type="EC" id="7.1.1.-" evidence="1"/>
<dbReference type="EMBL" id="AE009947">
    <property type="protein sequence ID" value="AAT44658.1"/>
    <property type="status" value="ALT_SEQ"/>
    <property type="molecule type" value="Genomic_DNA"/>
</dbReference>
<dbReference type="SMR" id="Q6L3D5"/>
<dbReference type="GO" id="GO:0009535">
    <property type="term" value="C:chloroplast thylakoid membrane"/>
    <property type="evidence" value="ECO:0007669"/>
    <property type="project" value="UniProtKB-SubCell"/>
</dbReference>
<dbReference type="GO" id="GO:0003954">
    <property type="term" value="F:NADH dehydrogenase activity"/>
    <property type="evidence" value="ECO:0007669"/>
    <property type="project" value="TreeGrafter"/>
</dbReference>
<dbReference type="GO" id="GO:0016655">
    <property type="term" value="F:oxidoreductase activity, acting on NAD(P)H, quinone or similar compound as acceptor"/>
    <property type="evidence" value="ECO:0007669"/>
    <property type="project" value="UniProtKB-UniRule"/>
</dbReference>
<dbReference type="GO" id="GO:0048038">
    <property type="term" value="F:quinone binding"/>
    <property type="evidence" value="ECO:0007669"/>
    <property type="project" value="UniProtKB-KW"/>
</dbReference>
<dbReference type="GO" id="GO:0009060">
    <property type="term" value="P:aerobic respiration"/>
    <property type="evidence" value="ECO:0007669"/>
    <property type="project" value="TreeGrafter"/>
</dbReference>
<dbReference type="GO" id="GO:0019684">
    <property type="term" value="P:photosynthesis, light reaction"/>
    <property type="evidence" value="ECO:0007669"/>
    <property type="project" value="UniProtKB-UniRule"/>
</dbReference>
<dbReference type="HAMAP" id="MF_01350">
    <property type="entry name" value="NDH1_NuoH"/>
    <property type="match status" value="1"/>
</dbReference>
<dbReference type="InterPro" id="IPR001694">
    <property type="entry name" value="NADH_UbQ_OxRdtase_su1/FPO"/>
</dbReference>
<dbReference type="InterPro" id="IPR018086">
    <property type="entry name" value="NADH_UbQ_OxRdtase_su1_CS"/>
</dbReference>
<dbReference type="NCBIfam" id="NF004741">
    <property type="entry name" value="PRK06076.1-2"/>
    <property type="match status" value="1"/>
</dbReference>
<dbReference type="PANTHER" id="PTHR11432">
    <property type="entry name" value="NADH DEHYDROGENASE SUBUNIT 1"/>
    <property type="match status" value="1"/>
</dbReference>
<dbReference type="PANTHER" id="PTHR11432:SF3">
    <property type="entry name" value="NADH-UBIQUINONE OXIDOREDUCTASE CHAIN 1"/>
    <property type="match status" value="1"/>
</dbReference>
<dbReference type="Pfam" id="PF00146">
    <property type="entry name" value="NADHdh"/>
    <property type="match status" value="1"/>
</dbReference>
<dbReference type="PROSITE" id="PS00667">
    <property type="entry name" value="COMPLEX1_ND1_1"/>
    <property type="match status" value="1"/>
</dbReference>
<dbReference type="PROSITE" id="PS00668">
    <property type="entry name" value="COMPLEX1_ND1_2"/>
    <property type="match status" value="1"/>
</dbReference>
<name>NU1C_SACHY</name>